<proteinExistence type="inferred from homology"/>
<gene>
    <name evidence="1" type="primary">ilvD</name>
    <name type="ordered locus">RHOS4_31220</name>
    <name type="ORF">RSP_3074</name>
</gene>
<name>ILVD_CERS4</name>
<feature type="chain" id="PRO_0000225417" description="Dihydroxy-acid dehydratase">
    <location>
        <begin position="1"/>
        <end position="612"/>
    </location>
</feature>
<feature type="active site" description="Proton acceptor" evidence="1">
    <location>
        <position position="518"/>
    </location>
</feature>
<feature type="binding site" evidence="1">
    <location>
        <position position="81"/>
    </location>
    <ligand>
        <name>Mg(2+)</name>
        <dbReference type="ChEBI" id="CHEBI:18420"/>
    </ligand>
</feature>
<feature type="binding site" evidence="1">
    <location>
        <position position="122"/>
    </location>
    <ligand>
        <name>[2Fe-2S] cluster</name>
        <dbReference type="ChEBI" id="CHEBI:190135"/>
    </ligand>
</feature>
<feature type="binding site" evidence="1">
    <location>
        <position position="123"/>
    </location>
    <ligand>
        <name>Mg(2+)</name>
        <dbReference type="ChEBI" id="CHEBI:18420"/>
    </ligand>
</feature>
<feature type="binding site" description="via carbamate group" evidence="1">
    <location>
        <position position="124"/>
    </location>
    <ligand>
        <name>Mg(2+)</name>
        <dbReference type="ChEBI" id="CHEBI:18420"/>
    </ligand>
</feature>
<feature type="binding site" evidence="1">
    <location>
        <position position="196"/>
    </location>
    <ligand>
        <name>[2Fe-2S] cluster</name>
        <dbReference type="ChEBI" id="CHEBI:190135"/>
    </ligand>
</feature>
<feature type="binding site" evidence="1">
    <location>
        <position position="492"/>
    </location>
    <ligand>
        <name>Mg(2+)</name>
        <dbReference type="ChEBI" id="CHEBI:18420"/>
    </ligand>
</feature>
<feature type="modified residue" description="N6-carboxylysine" evidence="1">
    <location>
        <position position="124"/>
    </location>
</feature>
<protein>
    <recommendedName>
        <fullName evidence="1">Dihydroxy-acid dehydratase</fullName>
        <shortName evidence="1">DAD</shortName>
        <ecNumber evidence="1">4.2.1.9</ecNumber>
    </recommendedName>
</protein>
<dbReference type="EC" id="4.2.1.9" evidence="1"/>
<dbReference type="EMBL" id="CP000144">
    <property type="protein sequence ID" value="ABA80690.1"/>
    <property type="molecule type" value="Genomic_DNA"/>
</dbReference>
<dbReference type="RefSeq" id="WP_011339020.1">
    <property type="nucleotide sequence ID" value="NZ_CP030272.1"/>
</dbReference>
<dbReference type="RefSeq" id="YP_354591.1">
    <property type="nucleotide sequence ID" value="NC_007494.2"/>
</dbReference>
<dbReference type="SMR" id="Q3IXP4"/>
<dbReference type="STRING" id="272943.RSP_3074"/>
<dbReference type="EnsemblBacteria" id="ABA80690">
    <property type="protein sequence ID" value="ABA80690"/>
    <property type="gene ID" value="RSP_3074"/>
</dbReference>
<dbReference type="GeneID" id="3721350"/>
<dbReference type="KEGG" id="rsp:RSP_3074"/>
<dbReference type="PATRIC" id="fig|272943.9.peg.3495"/>
<dbReference type="eggNOG" id="COG0129">
    <property type="taxonomic scope" value="Bacteria"/>
</dbReference>
<dbReference type="OrthoDB" id="9807077at2"/>
<dbReference type="PhylomeDB" id="Q3IXP4"/>
<dbReference type="UniPathway" id="UPA00047">
    <property type="reaction ID" value="UER00057"/>
</dbReference>
<dbReference type="UniPathway" id="UPA00049">
    <property type="reaction ID" value="UER00061"/>
</dbReference>
<dbReference type="Proteomes" id="UP000002703">
    <property type="component" value="Chromosome 2"/>
</dbReference>
<dbReference type="GO" id="GO:0005829">
    <property type="term" value="C:cytosol"/>
    <property type="evidence" value="ECO:0007669"/>
    <property type="project" value="TreeGrafter"/>
</dbReference>
<dbReference type="GO" id="GO:0051537">
    <property type="term" value="F:2 iron, 2 sulfur cluster binding"/>
    <property type="evidence" value="ECO:0007669"/>
    <property type="project" value="UniProtKB-UniRule"/>
</dbReference>
<dbReference type="GO" id="GO:0004160">
    <property type="term" value="F:dihydroxy-acid dehydratase activity"/>
    <property type="evidence" value="ECO:0007669"/>
    <property type="project" value="UniProtKB-UniRule"/>
</dbReference>
<dbReference type="GO" id="GO:0000287">
    <property type="term" value="F:magnesium ion binding"/>
    <property type="evidence" value="ECO:0007669"/>
    <property type="project" value="UniProtKB-UniRule"/>
</dbReference>
<dbReference type="GO" id="GO:0009097">
    <property type="term" value="P:isoleucine biosynthetic process"/>
    <property type="evidence" value="ECO:0007669"/>
    <property type="project" value="UniProtKB-UniRule"/>
</dbReference>
<dbReference type="GO" id="GO:0009099">
    <property type="term" value="P:L-valine biosynthetic process"/>
    <property type="evidence" value="ECO:0007669"/>
    <property type="project" value="UniProtKB-UniRule"/>
</dbReference>
<dbReference type="FunFam" id="3.50.30.80:FF:000001">
    <property type="entry name" value="Dihydroxy-acid dehydratase"/>
    <property type="match status" value="1"/>
</dbReference>
<dbReference type="Gene3D" id="3.50.30.80">
    <property type="entry name" value="IlvD/EDD C-terminal domain-like"/>
    <property type="match status" value="1"/>
</dbReference>
<dbReference type="HAMAP" id="MF_00012">
    <property type="entry name" value="IlvD"/>
    <property type="match status" value="1"/>
</dbReference>
<dbReference type="InterPro" id="IPR042096">
    <property type="entry name" value="Dihydro-acid_dehy_C"/>
</dbReference>
<dbReference type="InterPro" id="IPR004404">
    <property type="entry name" value="DihydroxyA_deHydtase"/>
</dbReference>
<dbReference type="InterPro" id="IPR020558">
    <property type="entry name" value="DiOHA_6PGluconate_deHydtase_CS"/>
</dbReference>
<dbReference type="InterPro" id="IPR056740">
    <property type="entry name" value="ILV_EDD_C"/>
</dbReference>
<dbReference type="InterPro" id="IPR000581">
    <property type="entry name" value="ILV_EDD_N"/>
</dbReference>
<dbReference type="InterPro" id="IPR037237">
    <property type="entry name" value="IlvD/EDD_N"/>
</dbReference>
<dbReference type="NCBIfam" id="TIGR00110">
    <property type="entry name" value="ilvD"/>
    <property type="match status" value="1"/>
</dbReference>
<dbReference type="NCBIfam" id="NF009103">
    <property type="entry name" value="PRK12448.1"/>
    <property type="match status" value="1"/>
</dbReference>
<dbReference type="PANTHER" id="PTHR43661">
    <property type="entry name" value="D-XYLONATE DEHYDRATASE"/>
    <property type="match status" value="1"/>
</dbReference>
<dbReference type="PANTHER" id="PTHR43661:SF3">
    <property type="entry name" value="D-XYLONATE DEHYDRATASE YAGF-RELATED"/>
    <property type="match status" value="1"/>
</dbReference>
<dbReference type="Pfam" id="PF24877">
    <property type="entry name" value="ILV_EDD_C"/>
    <property type="match status" value="1"/>
</dbReference>
<dbReference type="Pfam" id="PF00920">
    <property type="entry name" value="ILVD_EDD_N"/>
    <property type="match status" value="1"/>
</dbReference>
<dbReference type="SUPFAM" id="SSF143975">
    <property type="entry name" value="IlvD/EDD N-terminal domain-like"/>
    <property type="match status" value="1"/>
</dbReference>
<dbReference type="SUPFAM" id="SSF52016">
    <property type="entry name" value="LeuD/IlvD-like"/>
    <property type="match status" value="1"/>
</dbReference>
<dbReference type="PROSITE" id="PS00886">
    <property type="entry name" value="ILVD_EDD_1"/>
    <property type="match status" value="1"/>
</dbReference>
<dbReference type="PROSITE" id="PS00887">
    <property type="entry name" value="ILVD_EDD_2"/>
    <property type="match status" value="1"/>
</dbReference>
<organism>
    <name type="scientific">Cereibacter sphaeroides (strain ATCC 17023 / DSM 158 / JCM 6121 / CCUG 31486 / LMG 2827 / NBRC 12203 / NCIMB 8253 / ATH 2.4.1.)</name>
    <name type="common">Rhodobacter sphaeroides</name>
    <dbReference type="NCBI Taxonomy" id="272943"/>
    <lineage>
        <taxon>Bacteria</taxon>
        <taxon>Pseudomonadati</taxon>
        <taxon>Pseudomonadota</taxon>
        <taxon>Alphaproteobacteria</taxon>
        <taxon>Rhodobacterales</taxon>
        <taxon>Paracoccaceae</taxon>
        <taxon>Cereibacter</taxon>
    </lineage>
</organism>
<comment type="function">
    <text evidence="1">Functions in the biosynthesis of branched-chain amino acids. Catalyzes the dehydration of (2R,3R)-2,3-dihydroxy-3-methylpentanoate (2,3-dihydroxy-3-methylvalerate) into 2-oxo-3-methylpentanoate (2-oxo-3-methylvalerate) and of (2R)-2,3-dihydroxy-3-methylbutanoate (2,3-dihydroxyisovalerate) into 2-oxo-3-methylbutanoate (2-oxoisovalerate), the penultimate precursor to L-isoleucine and L-valine, respectively.</text>
</comment>
<comment type="catalytic activity">
    <reaction evidence="1">
        <text>(2R)-2,3-dihydroxy-3-methylbutanoate = 3-methyl-2-oxobutanoate + H2O</text>
        <dbReference type="Rhea" id="RHEA:24809"/>
        <dbReference type="ChEBI" id="CHEBI:11851"/>
        <dbReference type="ChEBI" id="CHEBI:15377"/>
        <dbReference type="ChEBI" id="CHEBI:49072"/>
        <dbReference type="EC" id="4.2.1.9"/>
    </reaction>
    <physiologicalReaction direction="left-to-right" evidence="1">
        <dbReference type="Rhea" id="RHEA:24810"/>
    </physiologicalReaction>
</comment>
<comment type="catalytic activity">
    <reaction evidence="1">
        <text>(2R,3R)-2,3-dihydroxy-3-methylpentanoate = (S)-3-methyl-2-oxopentanoate + H2O</text>
        <dbReference type="Rhea" id="RHEA:27694"/>
        <dbReference type="ChEBI" id="CHEBI:15377"/>
        <dbReference type="ChEBI" id="CHEBI:35146"/>
        <dbReference type="ChEBI" id="CHEBI:49258"/>
        <dbReference type="EC" id="4.2.1.9"/>
    </reaction>
    <physiologicalReaction direction="left-to-right" evidence="1">
        <dbReference type="Rhea" id="RHEA:27695"/>
    </physiologicalReaction>
</comment>
<comment type="cofactor">
    <cofactor evidence="1">
        <name>[2Fe-2S] cluster</name>
        <dbReference type="ChEBI" id="CHEBI:190135"/>
    </cofactor>
    <text evidence="1">Binds 1 [2Fe-2S] cluster per subunit. This cluster acts as a Lewis acid cofactor.</text>
</comment>
<comment type="cofactor">
    <cofactor evidence="1">
        <name>Mg(2+)</name>
        <dbReference type="ChEBI" id="CHEBI:18420"/>
    </cofactor>
</comment>
<comment type="pathway">
    <text evidence="1">Amino-acid biosynthesis; L-isoleucine biosynthesis; L-isoleucine from 2-oxobutanoate: step 3/4.</text>
</comment>
<comment type="pathway">
    <text evidence="1">Amino-acid biosynthesis; L-valine biosynthesis; L-valine from pyruvate: step 3/4.</text>
</comment>
<comment type="subunit">
    <text evidence="1">Homodimer.</text>
</comment>
<comment type="similarity">
    <text evidence="1">Belongs to the IlvD/Edd family.</text>
</comment>
<evidence type="ECO:0000255" key="1">
    <source>
        <dbReference type="HAMAP-Rule" id="MF_00012"/>
    </source>
</evidence>
<keyword id="KW-0001">2Fe-2S</keyword>
<keyword id="KW-0028">Amino-acid biosynthesis</keyword>
<keyword id="KW-0100">Branched-chain amino acid biosynthesis</keyword>
<keyword id="KW-0408">Iron</keyword>
<keyword id="KW-0411">Iron-sulfur</keyword>
<keyword id="KW-0456">Lyase</keyword>
<keyword id="KW-0460">Magnesium</keyword>
<keyword id="KW-0479">Metal-binding</keyword>
<keyword id="KW-1185">Reference proteome</keyword>
<reference key="1">
    <citation type="submission" date="2005-09" db="EMBL/GenBank/DDBJ databases">
        <title>Complete sequence of chromosome 2 of Rhodobacter sphaeroides 2.4.1.</title>
        <authorList>
            <person name="Copeland A."/>
            <person name="Lucas S."/>
            <person name="Lapidus A."/>
            <person name="Barry K."/>
            <person name="Detter J.C."/>
            <person name="Glavina T."/>
            <person name="Hammon N."/>
            <person name="Israni S."/>
            <person name="Pitluck S."/>
            <person name="Richardson P."/>
            <person name="Mackenzie C."/>
            <person name="Choudhary M."/>
            <person name="Larimer F."/>
            <person name="Hauser L.J."/>
            <person name="Land M."/>
            <person name="Donohue T.J."/>
            <person name="Kaplan S."/>
        </authorList>
    </citation>
    <scope>NUCLEOTIDE SEQUENCE [LARGE SCALE GENOMIC DNA]</scope>
    <source>
        <strain>ATCC 17023 / DSM 158 / JCM 6121 / CCUG 31486 / LMG 2827 / NBRC 12203 / NCIMB 8253 / ATH 2.4.1.</strain>
    </source>
</reference>
<accession>Q3IXP4</accession>
<sequence length="612" mass="64481">MPAFRSRTSTHGRNMAGARGLWRATGVKDSDFGKPIIAIVNSFTQFVPGHVHLKDLGQLVAREVEAAGGIAKEFNTIAVDDGIAMGHDGMLYSLPSRELIADSVEYMVNAHCADAMVCISNCDKITPGMLMAAMRLNIPAVFVSGGPMEAGKVTLGDGRTVKMDLIDAMVAAADEKVSDDDLTRIEQAACPTCGSCSGMFTANSMNCLTEALGLSLPGNGSTLATHAYRKELFLEAGRRAVELCRRYYEQEDEGVLPRAIATKEAFENAMALDIAMGGSTNTVLHILAAAQEGGVDFTMDDIDALSRRVPCLCKVAPNKADVHIEDVHRAGGIMSILGELDRGGLLHRDTRTVHAPTLGAAIDQWDIGRSNAPEARELFLAAPGGVPTQVAFSQSSTWDTLDTDRETGVIRSVATPFSKDGGLAVLKGNLAPDGCIVKTAGVDESILVFAGPAKVFESQDAAVYGILNGGVQAGDVVVIRYEGPKGGPGMQEMLYPTSYLKSKGLGKACALITDGRFSGGTSGLSIGHASPEAASGGPIGLVREGDRIEIDIPNRTITLAVPEAELAARRAEQDAKGWKPAGPRKRKVSQALKVYAQFASSADKGAVRVLPE</sequence>